<comment type="function">
    <text evidence="1">Ubiquitinous metalloproteinase that is involved in diverse functions such as remodeling of the vasculature, angiogenesis, tissue repair, tumor invasion, inflammation, and atherosclerotic plaque rupture. As well as degrading extracellular matrix proteins, can also act on several nonmatrix proteins such as big endothelial 1 and beta-type CGRP promoting vasoconstriction. Also cleaves KISS at a Gly-|-Leu bond. Appears to have a role in myocardial cell death pathways. Contributes to myocardial oxidative stress by regulating the activity of GSK3beta. Cleaves GSK3beta in vitro. Involved in the formation of the fibrovascular tissues (By similarity).</text>
</comment>
<comment type="function">
    <text evidence="1">PEX, the C-terminal non-catalytic fragment of MMP2, possesses anti-angiogenic and anti-tumor properties and inhibits cell migration and cell adhesion to FGF2 and vitronectin. Ligand for integrin alpha-v/beta-3 on the surface of blood vessels (By similarity).</text>
</comment>
<comment type="catalytic activity">
    <reaction evidence="2">
        <text>Cleavage of gelatin type I and collagen types IV, V, VII, X. Cleaves the collagen-like sequence Pro-Gln-Gly-|-Ile-Ala-Gly-Gln.</text>
        <dbReference type="EC" id="3.4.24.24"/>
    </reaction>
</comment>
<comment type="cofactor">
    <cofactor evidence="2">
        <name>Ca(2+)</name>
        <dbReference type="ChEBI" id="CHEBI:29108"/>
    </cofactor>
    <text evidence="2">Binds 4 Ca(2+) ions per subunit.</text>
</comment>
<comment type="cofactor">
    <cofactor evidence="2">
        <name>Zn(2+)</name>
        <dbReference type="ChEBI" id="CHEBI:29105"/>
    </cofactor>
    <text evidence="2">Binds 2 Zn(2+) ions per subunit.</text>
</comment>
<comment type="subunit">
    <text evidence="1">Interacts (via the C-terminal hemopexin-like domains-containing region) with the integrin alpha-V/beta-3; the interaction promotes vascular invasion in angiogenic vessels and melamoma cells. Interacts (via the C-terminal PEX domain) with TIMP2 (via the C-terminal); the interaction inhibits the degradation activity. Interacts with GSK3B (By similarity).</text>
</comment>
<comment type="subcellular location">
    <subcellularLocation>
        <location evidence="1">Secreted</location>
        <location evidence="1">Extracellular space</location>
        <location evidence="1">Extracellular matrix</location>
    </subcellularLocation>
    <subcellularLocation>
        <location evidence="1">Membrane</location>
    </subcellularLocation>
    <subcellularLocation>
        <location evidence="1">Nucleus</location>
    </subcellularLocation>
    <text evidence="1">Colocalizes with integrin alphaV/beta3 at the membrane surface in angiogenic blood vessels and melanomas. Found in mitochondria, along microfibrils, and in nuclei of cardiomyocytes (By similarity).</text>
</comment>
<comment type="domain">
    <text>The conserved cysteine present in the cysteine-switch motif binds the catalytic zinc ion, thus inhibiting the enzyme. The dissociation of the cysteine from the zinc ion upon the activation-peptide release activates the enzyme.</text>
</comment>
<comment type="PTM">
    <text evidence="1">Phosphorylation on multiple sites modulates enzymatic activity. Phosphorylated by PKC in vitro (By similarity).</text>
</comment>
<comment type="PTM">
    <text evidence="1">The propeptide is processed by MMP14 (MT-MMP1) and MMP16 (MT-MMP3) (By similarity). Autocatalytic cleavage in the C-terminal produces the anti-angiogenic peptide, PEX. This processing appears to be facilitated by binding integrinv/beta3 (By similarity).</text>
</comment>
<comment type="similarity">
    <text evidence="7">Belongs to the peptidase M10A family.</text>
</comment>
<dbReference type="EC" id="3.4.24.24" evidence="2"/>
<dbReference type="EMBL" id="D63579">
    <property type="protein sequence ID" value="BAA09796.1"/>
    <property type="molecule type" value="mRNA"/>
</dbReference>
<dbReference type="PIR" id="S70365">
    <property type="entry name" value="S70365"/>
</dbReference>
<dbReference type="RefSeq" id="NP_001075678.1">
    <property type="nucleotide sequence ID" value="NM_001082209.1"/>
</dbReference>
<dbReference type="SMR" id="P50757"/>
<dbReference type="FunCoup" id="P50757">
    <property type="interactions" value="54"/>
</dbReference>
<dbReference type="STRING" id="9986.ENSOCUP00000034116"/>
<dbReference type="MEROPS" id="M10.003"/>
<dbReference type="GlyCosmos" id="P50757">
    <property type="glycosylation" value="2 sites, No reported glycans"/>
</dbReference>
<dbReference type="PaxDb" id="9986-ENSOCUP00000005803"/>
<dbReference type="GeneID" id="100009000"/>
<dbReference type="KEGG" id="ocu:100009000"/>
<dbReference type="CTD" id="4313"/>
<dbReference type="eggNOG" id="KOG1565">
    <property type="taxonomic scope" value="Eukaryota"/>
</dbReference>
<dbReference type="InParanoid" id="P50757"/>
<dbReference type="OrthoDB" id="406838at2759"/>
<dbReference type="Proteomes" id="UP000001811">
    <property type="component" value="Unplaced"/>
</dbReference>
<dbReference type="GO" id="GO:0031012">
    <property type="term" value="C:extracellular matrix"/>
    <property type="evidence" value="ECO:0007669"/>
    <property type="project" value="InterPro"/>
</dbReference>
<dbReference type="GO" id="GO:0005615">
    <property type="term" value="C:extracellular space"/>
    <property type="evidence" value="ECO:0007669"/>
    <property type="project" value="TreeGrafter"/>
</dbReference>
<dbReference type="GO" id="GO:0016020">
    <property type="term" value="C:membrane"/>
    <property type="evidence" value="ECO:0007669"/>
    <property type="project" value="UniProtKB-SubCell"/>
</dbReference>
<dbReference type="GO" id="GO:0005634">
    <property type="term" value="C:nucleus"/>
    <property type="evidence" value="ECO:0007669"/>
    <property type="project" value="UniProtKB-SubCell"/>
</dbReference>
<dbReference type="GO" id="GO:0004175">
    <property type="term" value="F:endopeptidase activity"/>
    <property type="evidence" value="ECO:0000250"/>
    <property type="project" value="UniProtKB"/>
</dbReference>
<dbReference type="GO" id="GO:0004222">
    <property type="term" value="F:metalloendopeptidase activity"/>
    <property type="evidence" value="ECO:0007669"/>
    <property type="project" value="UniProtKB-EC"/>
</dbReference>
<dbReference type="GO" id="GO:0008270">
    <property type="term" value="F:zinc ion binding"/>
    <property type="evidence" value="ECO:0007669"/>
    <property type="project" value="InterPro"/>
</dbReference>
<dbReference type="GO" id="GO:0001525">
    <property type="term" value="P:angiogenesis"/>
    <property type="evidence" value="ECO:0007669"/>
    <property type="project" value="UniProtKB-KW"/>
</dbReference>
<dbReference type="GO" id="GO:0071492">
    <property type="term" value="P:cellular response to UV-A"/>
    <property type="evidence" value="ECO:0000250"/>
    <property type="project" value="UniProtKB"/>
</dbReference>
<dbReference type="GO" id="GO:0030574">
    <property type="term" value="P:collagen catabolic process"/>
    <property type="evidence" value="ECO:0007669"/>
    <property type="project" value="UniProtKB-KW"/>
</dbReference>
<dbReference type="GO" id="GO:0030198">
    <property type="term" value="P:extracellular matrix organization"/>
    <property type="evidence" value="ECO:0007669"/>
    <property type="project" value="TreeGrafter"/>
</dbReference>
<dbReference type="GO" id="GO:0006508">
    <property type="term" value="P:proteolysis"/>
    <property type="evidence" value="ECO:0007669"/>
    <property type="project" value="UniProtKB-KW"/>
</dbReference>
<dbReference type="GO" id="GO:0001666">
    <property type="term" value="P:response to hypoxia"/>
    <property type="evidence" value="ECO:0007669"/>
    <property type="project" value="TreeGrafter"/>
</dbReference>
<dbReference type="GO" id="GO:0048771">
    <property type="term" value="P:tissue remodeling"/>
    <property type="evidence" value="ECO:0007669"/>
    <property type="project" value="TreeGrafter"/>
</dbReference>
<dbReference type="CDD" id="cd00062">
    <property type="entry name" value="FN2"/>
    <property type="match status" value="3"/>
</dbReference>
<dbReference type="CDD" id="cd00094">
    <property type="entry name" value="HX"/>
    <property type="match status" value="1"/>
</dbReference>
<dbReference type="CDD" id="cd04278">
    <property type="entry name" value="ZnMc_MMP"/>
    <property type="match status" value="1"/>
</dbReference>
<dbReference type="FunFam" id="2.10.10.10:FF:000002">
    <property type="entry name" value="72 kDa type IV collagenase"/>
    <property type="match status" value="1"/>
</dbReference>
<dbReference type="FunFam" id="2.110.10.10:FF:000004">
    <property type="entry name" value="72 kDa type IV collagenase"/>
    <property type="match status" value="1"/>
</dbReference>
<dbReference type="FunFam" id="3.40.390.10:FF:000010">
    <property type="entry name" value="72 kDa type IV collagenase"/>
    <property type="match status" value="1"/>
</dbReference>
<dbReference type="FunFam" id="2.10.10.10:FF:000001">
    <property type="entry name" value="Fibronectin 1a isoform 1"/>
    <property type="match status" value="2"/>
</dbReference>
<dbReference type="Gene3D" id="3.40.390.10">
    <property type="entry name" value="Collagenase (Catalytic Domain)"/>
    <property type="match status" value="2"/>
</dbReference>
<dbReference type="Gene3D" id="2.10.10.10">
    <property type="entry name" value="Fibronectin, type II, collagen-binding"/>
    <property type="match status" value="2"/>
</dbReference>
<dbReference type="Gene3D" id="2.110.10.10">
    <property type="entry name" value="Hemopexin-like domain"/>
    <property type="match status" value="1"/>
</dbReference>
<dbReference type="InterPro" id="IPR000562">
    <property type="entry name" value="FN_type2_dom"/>
</dbReference>
<dbReference type="InterPro" id="IPR036943">
    <property type="entry name" value="FN_type2_sf"/>
</dbReference>
<dbReference type="InterPro" id="IPR000585">
    <property type="entry name" value="Hemopexin-like_dom"/>
</dbReference>
<dbReference type="InterPro" id="IPR036375">
    <property type="entry name" value="Hemopexin-like_dom_sf"/>
</dbReference>
<dbReference type="InterPro" id="IPR018487">
    <property type="entry name" value="Hemopexin-like_repeat"/>
</dbReference>
<dbReference type="InterPro" id="IPR018486">
    <property type="entry name" value="Hemopexin_CS"/>
</dbReference>
<dbReference type="InterPro" id="IPR013806">
    <property type="entry name" value="Kringle-like"/>
</dbReference>
<dbReference type="InterPro" id="IPR033739">
    <property type="entry name" value="M10A_MMP"/>
</dbReference>
<dbReference type="InterPro" id="IPR024079">
    <property type="entry name" value="MetalloPept_cat_dom_sf"/>
</dbReference>
<dbReference type="InterPro" id="IPR001818">
    <property type="entry name" value="Pept_M10_metallopeptidase"/>
</dbReference>
<dbReference type="InterPro" id="IPR021190">
    <property type="entry name" value="Pept_M10A"/>
</dbReference>
<dbReference type="InterPro" id="IPR021158">
    <property type="entry name" value="Pept_M10A_Zn_BS"/>
</dbReference>
<dbReference type="InterPro" id="IPR006026">
    <property type="entry name" value="Peptidase_Metallo"/>
</dbReference>
<dbReference type="InterPro" id="IPR002477">
    <property type="entry name" value="Peptidoglycan-bd-like"/>
</dbReference>
<dbReference type="InterPro" id="IPR036365">
    <property type="entry name" value="PGBD-like_sf"/>
</dbReference>
<dbReference type="PANTHER" id="PTHR10201:SF29">
    <property type="entry name" value="72 KDA TYPE IV COLLAGENASE"/>
    <property type="match status" value="1"/>
</dbReference>
<dbReference type="PANTHER" id="PTHR10201">
    <property type="entry name" value="MATRIX METALLOPROTEINASE"/>
    <property type="match status" value="1"/>
</dbReference>
<dbReference type="Pfam" id="PF00040">
    <property type="entry name" value="fn2"/>
    <property type="match status" value="3"/>
</dbReference>
<dbReference type="Pfam" id="PF00045">
    <property type="entry name" value="Hemopexin"/>
    <property type="match status" value="4"/>
</dbReference>
<dbReference type="Pfam" id="PF00413">
    <property type="entry name" value="Peptidase_M10"/>
    <property type="match status" value="2"/>
</dbReference>
<dbReference type="Pfam" id="PF01471">
    <property type="entry name" value="PG_binding_1"/>
    <property type="match status" value="1"/>
</dbReference>
<dbReference type="PIRSF" id="PIRSF001191">
    <property type="entry name" value="Peptidase_M10A_matrix"/>
    <property type="match status" value="1"/>
</dbReference>
<dbReference type="PRINTS" id="PR00013">
    <property type="entry name" value="FNTYPEII"/>
</dbReference>
<dbReference type="PRINTS" id="PR00138">
    <property type="entry name" value="MATRIXIN"/>
</dbReference>
<dbReference type="SMART" id="SM00059">
    <property type="entry name" value="FN2"/>
    <property type="match status" value="3"/>
</dbReference>
<dbReference type="SMART" id="SM00120">
    <property type="entry name" value="HX"/>
    <property type="match status" value="4"/>
</dbReference>
<dbReference type="SMART" id="SM00235">
    <property type="entry name" value="ZnMc"/>
    <property type="match status" value="1"/>
</dbReference>
<dbReference type="SUPFAM" id="SSF50923">
    <property type="entry name" value="Hemopexin-like domain"/>
    <property type="match status" value="1"/>
</dbReference>
<dbReference type="SUPFAM" id="SSF57440">
    <property type="entry name" value="Kringle-like"/>
    <property type="match status" value="3"/>
</dbReference>
<dbReference type="SUPFAM" id="SSF55486">
    <property type="entry name" value="Metalloproteases ('zincins'), catalytic domain"/>
    <property type="match status" value="1"/>
</dbReference>
<dbReference type="SUPFAM" id="SSF47090">
    <property type="entry name" value="PGBD-like"/>
    <property type="match status" value="1"/>
</dbReference>
<dbReference type="PROSITE" id="PS00546">
    <property type="entry name" value="CYSTEINE_SWITCH"/>
    <property type="match status" value="1"/>
</dbReference>
<dbReference type="PROSITE" id="PS00023">
    <property type="entry name" value="FN2_1"/>
    <property type="match status" value="3"/>
</dbReference>
<dbReference type="PROSITE" id="PS51092">
    <property type="entry name" value="FN2_2"/>
    <property type="match status" value="3"/>
</dbReference>
<dbReference type="PROSITE" id="PS00024">
    <property type="entry name" value="HEMOPEXIN"/>
    <property type="match status" value="1"/>
</dbReference>
<dbReference type="PROSITE" id="PS51642">
    <property type="entry name" value="HEMOPEXIN_2"/>
    <property type="match status" value="4"/>
</dbReference>
<dbReference type="PROSITE" id="PS00142">
    <property type="entry name" value="ZINC_PROTEASE"/>
    <property type="match status" value="1"/>
</dbReference>
<proteinExistence type="evidence at transcript level"/>
<reference key="1">
    <citation type="journal article" date="1996" name="Biochim. Biophys. Acta">
        <title>Molecular cloning of rabbit matrix metalloproteinase-2 and its broad expression at several tissues.</title>
        <authorList>
            <person name="Matsumoto S."/>
            <person name="Katoh M."/>
            <person name="Watanabe T."/>
            <person name="Masuho Y."/>
        </authorList>
    </citation>
    <scope>NUCLEOTIDE SEQUENCE [MRNA]</scope>
    <source>
        <strain>Japanese white</strain>
        <tissue>Synovial cell</tissue>
    </source>
</reference>
<protein>
    <recommendedName>
        <fullName>72 kDa type IV collagenase</fullName>
        <ecNumber evidence="2">3.4.24.24</ecNumber>
    </recommendedName>
    <alternativeName>
        <fullName>72 kDa gelatinase</fullName>
    </alternativeName>
    <alternativeName>
        <fullName>Gelatinase A</fullName>
    </alternativeName>
    <alternativeName>
        <fullName>Matrix metalloproteinase-2</fullName>
        <shortName>MMP-2</shortName>
    </alternativeName>
    <component>
        <recommendedName>
            <fullName>PEX</fullName>
        </recommendedName>
    </component>
</protein>
<keyword id="KW-0037">Angiogenesis</keyword>
<keyword id="KW-0068">Autocatalytic cleavage</keyword>
<keyword id="KW-0106">Calcium</keyword>
<keyword id="KW-0177">Collagen degradation</keyword>
<keyword id="KW-1015">Disulfide bond</keyword>
<keyword id="KW-0272">Extracellular matrix</keyword>
<keyword id="KW-0325">Glycoprotein</keyword>
<keyword id="KW-0378">Hydrolase</keyword>
<keyword id="KW-0472">Membrane</keyword>
<keyword id="KW-0479">Metal-binding</keyword>
<keyword id="KW-0482">Metalloprotease</keyword>
<keyword id="KW-0539">Nucleus</keyword>
<keyword id="KW-0597">Phosphoprotein</keyword>
<keyword id="KW-0645">Protease</keyword>
<keyword id="KW-1185">Reference proteome</keyword>
<keyword id="KW-0677">Repeat</keyword>
<keyword id="KW-0964">Secreted</keyword>
<keyword id="KW-0732">Signal</keyword>
<keyword id="KW-0862">Zinc</keyword>
<keyword id="KW-0865">Zymogen</keyword>
<name>MMP2_RABIT</name>
<accession>P50757</accession>
<organism>
    <name type="scientific">Oryctolagus cuniculus</name>
    <name type="common">Rabbit</name>
    <dbReference type="NCBI Taxonomy" id="9986"/>
    <lineage>
        <taxon>Eukaryota</taxon>
        <taxon>Metazoa</taxon>
        <taxon>Chordata</taxon>
        <taxon>Craniata</taxon>
        <taxon>Vertebrata</taxon>
        <taxon>Euteleostomi</taxon>
        <taxon>Mammalia</taxon>
        <taxon>Eutheria</taxon>
        <taxon>Euarchontoglires</taxon>
        <taxon>Glires</taxon>
        <taxon>Lagomorpha</taxon>
        <taxon>Leporidae</taxon>
        <taxon>Oryctolagus</taxon>
    </lineage>
</organism>
<evidence type="ECO:0000250" key="1"/>
<evidence type="ECO:0000250" key="2">
    <source>
        <dbReference type="UniProtKB" id="P08253"/>
    </source>
</evidence>
<evidence type="ECO:0000250" key="3">
    <source>
        <dbReference type="UniProtKB" id="P33436"/>
    </source>
</evidence>
<evidence type="ECO:0000255" key="4"/>
<evidence type="ECO:0000255" key="5">
    <source>
        <dbReference type="PROSITE-ProRule" id="PRU00479"/>
    </source>
</evidence>
<evidence type="ECO:0000255" key="6">
    <source>
        <dbReference type="PROSITE-ProRule" id="PRU10095"/>
    </source>
</evidence>
<evidence type="ECO:0000305" key="7"/>
<sequence length="662" mass="73803">MEALGARGALAGFLRALCVLGCLLGRATAPPSPVIKFPGDVAPKTDKELAVQYLNTFYGCPKDSCNLFVLKDTLKKMQKFFGLPQTGELDQSTIETMRKPRCGNPDVANYNFFPRKPKWDKNQITYRIIGYTPDLDPETVDDAFARAFQVWSNVTPLRFSRIHDGEADIMINFGRWEHGDGYPFDGKDGLLAHAFAPGTGVGGDSHFDDDELWTLGEGQVVRVKYGNADGEYCKFPFLFNGKEYTSCTDTGRSDGFLWCSTTYNFEKDGKYGFCPHEALFTMGGNADGQPCKFPFRFQGTSYSSCTTEGRTDGYRWCGTTEDYDRDKKYGFCPETAMSTIGGNSEGAPCVFPFTFLGNKYESCTSAGRSDGKMWCATSTNYDDDRKWGFCPDQGYSLFLVAAHEFGHAMGLEHSQDPGALMAPIYTYTKNFRLSQDDIKGIQELYGASPDAGTDAGTGPTPTLGPVTPEICTQDIVFDGIAQIRGEIFFFKDRFIWRTVTPGDKPMGPLLVATFWPELPEKIDAVYEAPQEEKAVFFAGNEYWVYSASTLERGYPKPLTSLGLPPDVQRVDAAFNWSKNKKTYIFAGDKFWRYNEVKKKMDPGFPRLIADAWNAIPDHLDAVVDLQGSGHSYFFKGTYYLKLENQSLKSVKVGSIKTDWLGC</sequence>
<feature type="signal peptide" evidence="3">
    <location>
        <begin position="1"/>
        <end position="29"/>
    </location>
</feature>
<feature type="propeptide" id="PRO_0000028718" description="Activation peptide">
    <location>
        <begin position="30"/>
        <end position="109"/>
    </location>
</feature>
<feature type="chain" id="PRO_0000028719" description="72 kDa type IV collagenase">
    <location>
        <begin position="110"/>
        <end position="662"/>
    </location>
</feature>
<feature type="chain" id="PRO_0000391628" description="PEX" evidence="1">
    <location>
        <begin position="445"/>
        <end position="662"/>
    </location>
</feature>
<feature type="domain" description="Fibronectin type-II 1" evidence="5">
    <location>
        <begin position="228"/>
        <end position="276"/>
    </location>
</feature>
<feature type="domain" description="Fibronectin type-II 2" evidence="5">
    <location>
        <begin position="286"/>
        <end position="334"/>
    </location>
</feature>
<feature type="domain" description="Fibronectin type-II 3" evidence="5">
    <location>
        <begin position="344"/>
        <end position="392"/>
    </location>
</feature>
<feature type="repeat" description="Hemopexin 1">
    <location>
        <begin position="474"/>
        <end position="518"/>
    </location>
</feature>
<feature type="repeat" description="Hemopexin 2">
    <location>
        <begin position="519"/>
        <end position="565"/>
    </location>
</feature>
<feature type="repeat" description="Hemopexin 3">
    <location>
        <begin position="567"/>
        <end position="615"/>
    </location>
</feature>
<feature type="repeat" description="Hemopexin 4">
    <location>
        <begin position="616"/>
        <end position="662"/>
    </location>
</feature>
<feature type="region of interest" description="Collagenase-like 1">
    <location>
        <begin position="110"/>
        <end position="221"/>
    </location>
</feature>
<feature type="region of interest" description="Collagen-binding">
    <location>
        <begin position="222"/>
        <end position="396"/>
    </location>
</feature>
<feature type="region of interest" description="Collagenase-like 2">
    <location>
        <begin position="397"/>
        <end position="467"/>
    </location>
</feature>
<feature type="region of interest" description="Required for inhibitor TIMP2 binding" evidence="1">
    <location>
        <begin position="414"/>
        <end position="662"/>
    </location>
</feature>
<feature type="short sequence motif" description="Cysteine switch" evidence="1">
    <location>
        <begin position="100"/>
        <end position="107"/>
    </location>
</feature>
<feature type="active site" evidence="6">
    <location>
        <position position="404"/>
    </location>
</feature>
<feature type="binding site" description="in inhibited form" evidence="2">
    <location>
        <position position="102"/>
    </location>
    <ligand>
        <name>Zn(2+)</name>
        <dbReference type="ChEBI" id="CHEBI:29105"/>
        <label>1</label>
        <note>catalytic</note>
    </ligand>
</feature>
<feature type="binding site" evidence="2">
    <location>
        <position position="134"/>
    </location>
    <ligand>
        <name>Ca(2+)</name>
        <dbReference type="ChEBI" id="CHEBI:29108"/>
        <label>1</label>
    </ligand>
</feature>
<feature type="binding site" evidence="2">
    <location>
        <position position="168"/>
    </location>
    <ligand>
        <name>Ca(2+)</name>
        <dbReference type="ChEBI" id="CHEBI:29108"/>
        <label>2</label>
    </ligand>
</feature>
<feature type="binding site" evidence="2">
    <location>
        <position position="178"/>
    </location>
    <ligand>
        <name>Zn(2+)</name>
        <dbReference type="ChEBI" id="CHEBI:29105"/>
        <label>2</label>
    </ligand>
</feature>
<feature type="binding site" evidence="2">
    <location>
        <position position="180"/>
    </location>
    <ligand>
        <name>Zn(2+)</name>
        <dbReference type="ChEBI" id="CHEBI:29105"/>
        <label>2</label>
    </ligand>
</feature>
<feature type="binding site" evidence="2">
    <location>
        <position position="185"/>
    </location>
    <ligand>
        <name>Ca(2+)</name>
        <dbReference type="ChEBI" id="CHEBI:29108"/>
        <label>3</label>
    </ligand>
</feature>
<feature type="binding site" evidence="2">
    <location>
        <position position="186"/>
    </location>
    <ligand>
        <name>Ca(2+)</name>
        <dbReference type="ChEBI" id="CHEBI:29108"/>
        <label>3</label>
    </ligand>
</feature>
<feature type="binding site" evidence="2">
    <location>
        <position position="193"/>
    </location>
    <ligand>
        <name>Zn(2+)</name>
        <dbReference type="ChEBI" id="CHEBI:29105"/>
        <label>2</label>
    </ligand>
</feature>
<feature type="binding site" evidence="2">
    <location>
        <position position="200"/>
    </location>
    <ligand>
        <name>Ca(2+)</name>
        <dbReference type="ChEBI" id="CHEBI:29108"/>
        <label>2</label>
    </ligand>
</feature>
<feature type="binding site" evidence="2">
    <location>
        <position position="202"/>
    </location>
    <ligand>
        <name>Ca(2+)</name>
        <dbReference type="ChEBI" id="CHEBI:29108"/>
        <label>2</label>
    </ligand>
</feature>
<feature type="binding site" evidence="2">
    <location>
        <position position="204"/>
    </location>
    <ligand>
        <name>Ca(2+)</name>
        <dbReference type="ChEBI" id="CHEBI:29108"/>
        <label>2</label>
    </ligand>
</feature>
<feature type="binding site" evidence="2">
    <location>
        <position position="206"/>
    </location>
    <ligand>
        <name>Zn(2+)</name>
        <dbReference type="ChEBI" id="CHEBI:29105"/>
        <label>2</label>
    </ligand>
</feature>
<feature type="binding site" evidence="2">
    <location>
        <position position="208"/>
    </location>
    <ligand>
        <name>Ca(2+)</name>
        <dbReference type="ChEBI" id="CHEBI:29108"/>
        <label>3</label>
    </ligand>
</feature>
<feature type="binding site" evidence="2">
    <location>
        <position position="209"/>
    </location>
    <ligand>
        <name>Ca(2+)</name>
        <dbReference type="ChEBI" id="CHEBI:29108"/>
        <label>1</label>
    </ligand>
</feature>
<feature type="binding site" evidence="2">
    <location>
        <position position="211"/>
    </location>
    <ligand>
        <name>Ca(2+)</name>
        <dbReference type="ChEBI" id="CHEBI:29108"/>
        <label>1</label>
    </ligand>
</feature>
<feature type="binding site" evidence="2">
    <location>
        <position position="211"/>
    </location>
    <ligand>
        <name>Ca(2+)</name>
        <dbReference type="ChEBI" id="CHEBI:29108"/>
        <label>3</label>
    </ligand>
</feature>
<feature type="binding site" evidence="2">
    <location>
        <position position="403"/>
    </location>
    <ligand>
        <name>Zn(2+)</name>
        <dbReference type="ChEBI" id="CHEBI:29105"/>
        <label>1</label>
        <note>catalytic</note>
    </ligand>
</feature>
<feature type="binding site" evidence="2">
    <location>
        <position position="407"/>
    </location>
    <ligand>
        <name>Zn(2+)</name>
        <dbReference type="ChEBI" id="CHEBI:29105"/>
        <label>1</label>
        <note>catalytic</note>
    </ligand>
</feature>
<feature type="binding site" evidence="2">
    <location>
        <position position="413"/>
    </location>
    <ligand>
        <name>Zn(2+)</name>
        <dbReference type="ChEBI" id="CHEBI:29105"/>
        <label>1</label>
        <note>catalytic</note>
    </ligand>
</feature>
<feature type="binding site" evidence="2">
    <location>
        <position position="478"/>
    </location>
    <ligand>
        <name>Ca(2+)</name>
        <dbReference type="ChEBI" id="CHEBI:29108"/>
        <label>4</label>
    </ligand>
</feature>
<feature type="binding site" evidence="2">
    <location>
        <position position="523"/>
    </location>
    <ligand>
        <name>Ca(2+)</name>
        <dbReference type="ChEBI" id="CHEBI:29108"/>
        <label>4</label>
    </ligand>
</feature>
<feature type="binding site" evidence="2">
    <location>
        <position position="571"/>
    </location>
    <ligand>
        <name>Ca(2+)</name>
        <dbReference type="ChEBI" id="CHEBI:29108"/>
        <label>4</label>
    </ligand>
</feature>
<feature type="binding site" evidence="2">
    <location>
        <position position="620"/>
    </location>
    <ligand>
        <name>Ca(2+)</name>
        <dbReference type="ChEBI" id="CHEBI:29108"/>
        <label>4</label>
    </ligand>
</feature>
<feature type="glycosylation site" description="N-linked (GlcNAc...) asparagine" evidence="4">
    <location>
        <position position="575"/>
    </location>
</feature>
<feature type="glycosylation site" description="N-linked (GlcNAc...) asparagine" evidence="4">
    <location>
        <position position="644"/>
    </location>
</feature>
<feature type="disulfide bond" evidence="5">
    <location>
        <begin position="233"/>
        <end position="259"/>
    </location>
</feature>
<feature type="disulfide bond" evidence="5">
    <location>
        <begin position="247"/>
        <end position="274"/>
    </location>
</feature>
<feature type="disulfide bond" evidence="5">
    <location>
        <begin position="291"/>
        <end position="317"/>
    </location>
</feature>
<feature type="disulfide bond" evidence="5">
    <location>
        <begin position="305"/>
        <end position="332"/>
    </location>
</feature>
<feature type="disulfide bond" evidence="5">
    <location>
        <begin position="349"/>
        <end position="375"/>
    </location>
</feature>
<feature type="disulfide bond" evidence="5">
    <location>
        <begin position="363"/>
        <end position="390"/>
    </location>
</feature>
<feature type="disulfide bond" evidence="5">
    <location>
        <begin position="471"/>
        <end position="662"/>
    </location>
</feature>
<gene>
    <name type="primary">MMP2</name>
</gene>